<protein>
    <recommendedName>
        <fullName>Uncharacterized protein MT1327</fullName>
    </recommendedName>
</protein>
<name>Y1289_MYCTO</name>
<keyword id="KW-1185">Reference proteome</keyword>
<proteinExistence type="predicted"/>
<gene>
    <name type="ordered locus">MT1327</name>
</gene>
<sequence>MCVSVGESVAQSLQQWDRKLWDVAMLHACNAVDETGRKRYPTLGVGTRFRTALRDSLDIYGVMATPGVDLEKTRFPVGVRSDLLPDKRPDIADVLYGIHRWLHGHADESSVEFEVSPYVNASAALRIANDGKIQLPKSAILGLLAVAVFAPENKGEVIPPDYQLSWYDHVFFISVWWGWQDHFREIVNVDRASLVALDFGDLWNGWTPVG</sequence>
<accession>P9WM36</accession>
<accession>L0T7U4</accession>
<accession>P64799</accession>
<accession>Q10615</accession>
<feature type="chain" id="PRO_0000427372" description="Uncharacterized protein MT1327">
    <location>
        <begin position="1"/>
        <end position="210"/>
    </location>
</feature>
<organism>
    <name type="scientific">Mycobacterium tuberculosis (strain CDC 1551 / Oshkosh)</name>
    <dbReference type="NCBI Taxonomy" id="83331"/>
    <lineage>
        <taxon>Bacteria</taxon>
        <taxon>Bacillati</taxon>
        <taxon>Actinomycetota</taxon>
        <taxon>Actinomycetes</taxon>
        <taxon>Mycobacteriales</taxon>
        <taxon>Mycobacteriaceae</taxon>
        <taxon>Mycobacterium</taxon>
        <taxon>Mycobacterium tuberculosis complex</taxon>
    </lineage>
</organism>
<dbReference type="EMBL" id="AE000516">
    <property type="protein sequence ID" value="AAK45588.1"/>
    <property type="molecule type" value="Genomic_DNA"/>
</dbReference>
<dbReference type="PIR" id="E70772">
    <property type="entry name" value="E70772"/>
</dbReference>
<dbReference type="RefSeq" id="WP_003406626.1">
    <property type="nucleotide sequence ID" value="NZ_KK341227.1"/>
</dbReference>
<dbReference type="KEGG" id="mtc:MT1327"/>
<dbReference type="PATRIC" id="fig|83331.31.peg.1433"/>
<dbReference type="HOGENOM" id="CLU_1298637_0_0_11"/>
<dbReference type="Proteomes" id="UP000001020">
    <property type="component" value="Chromosome"/>
</dbReference>
<reference key="1">
    <citation type="journal article" date="2002" name="J. Bacteriol.">
        <title>Whole-genome comparison of Mycobacterium tuberculosis clinical and laboratory strains.</title>
        <authorList>
            <person name="Fleischmann R.D."/>
            <person name="Alland D."/>
            <person name="Eisen J.A."/>
            <person name="Carpenter L."/>
            <person name="White O."/>
            <person name="Peterson J.D."/>
            <person name="DeBoy R.T."/>
            <person name="Dodson R.J."/>
            <person name="Gwinn M.L."/>
            <person name="Haft D.H."/>
            <person name="Hickey E.K."/>
            <person name="Kolonay J.F."/>
            <person name="Nelson W.C."/>
            <person name="Umayam L.A."/>
            <person name="Ermolaeva M.D."/>
            <person name="Salzberg S.L."/>
            <person name="Delcher A."/>
            <person name="Utterback T.R."/>
            <person name="Weidman J.F."/>
            <person name="Khouri H.M."/>
            <person name="Gill J."/>
            <person name="Mikula A."/>
            <person name="Bishai W."/>
            <person name="Jacobs W.R. Jr."/>
            <person name="Venter J.C."/>
            <person name="Fraser C.M."/>
        </authorList>
    </citation>
    <scope>NUCLEOTIDE SEQUENCE [LARGE SCALE GENOMIC DNA]</scope>
    <source>
        <strain>CDC 1551 / Oshkosh</strain>
    </source>
</reference>